<name>Y2118_VIBC1</name>
<sequence>MIKDRLLQLVHLLISLALIMGALGIGNTIQNLTGVSVPGSVIGMLVLFFSMTLGLVKVEWVKPGATLFIRYMILLFVPISVGLMQHFDMLLANALPIIASAVGGSLIVLISLAWFLDYLLKEKH</sequence>
<dbReference type="EMBL" id="CP000789">
    <property type="protein sequence ID" value="ABU71083.1"/>
    <property type="molecule type" value="Genomic_DNA"/>
</dbReference>
<dbReference type="RefSeq" id="WP_012127845.1">
    <property type="nucleotide sequence ID" value="NC_022269.1"/>
</dbReference>
<dbReference type="SMR" id="A7MVI0"/>
<dbReference type="KEGG" id="vha:VIBHAR_02118"/>
<dbReference type="PATRIC" id="fig|338187.25.peg.573"/>
<dbReference type="Proteomes" id="UP000008152">
    <property type="component" value="Chromosome I"/>
</dbReference>
<dbReference type="GO" id="GO:0005886">
    <property type="term" value="C:plasma membrane"/>
    <property type="evidence" value="ECO:0007669"/>
    <property type="project" value="UniProtKB-SubCell"/>
</dbReference>
<dbReference type="HAMAP" id="MF_01144">
    <property type="entry name" value="UPF0299"/>
    <property type="match status" value="1"/>
</dbReference>
<dbReference type="InterPro" id="IPR005538">
    <property type="entry name" value="LrgA/CidA"/>
</dbReference>
<dbReference type="InterPro" id="IPR022957">
    <property type="entry name" value="Uncharacterised_UPF0299"/>
</dbReference>
<dbReference type="PANTHER" id="PTHR33931">
    <property type="entry name" value="HOLIN-LIKE PROTEIN CIDA-RELATED"/>
    <property type="match status" value="1"/>
</dbReference>
<dbReference type="PANTHER" id="PTHR33931:SF5">
    <property type="entry name" value="UPF0299 MEMBRANE PROTEIN YOHJ"/>
    <property type="match status" value="1"/>
</dbReference>
<dbReference type="Pfam" id="PF03788">
    <property type="entry name" value="LrgA"/>
    <property type="match status" value="1"/>
</dbReference>
<proteinExistence type="inferred from homology"/>
<keyword id="KW-0997">Cell inner membrane</keyword>
<keyword id="KW-1003">Cell membrane</keyword>
<keyword id="KW-0472">Membrane</keyword>
<keyword id="KW-0812">Transmembrane</keyword>
<keyword id="KW-1133">Transmembrane helix</keyword>
<comment type="subcellular location">
    <subcellularLocation>
        <location evidence="1">Cell inner membrane</location>
        <topology evidence="1">Multi-pass membrane protein</topology>
    </subcellularLocation>
</comment>
<comment type="similarity">
    <text evidence="1">Belongs to the UPF0299 family.</text>
</comment>
<protein>
    <recommendedName>
        <fullName evidence="1">UPF0299 membrane protein VIBHAR_02118</fullName>
    </recommendedName>
</protein>
<reference key="1">
    <citation type="submission" date="2007-08" db="EMBL/GenBank/DDBJ databases">
        <authorList>
            <consortium name="The Vibrio harveyi Genome Sequencing Project"/>
            <person name="Bassler B."/>
            <person name="Clifton S.W."/>
            <person name="Fulton L."/>
            <person name="Delehaunty K."/>
            <person name="Fronick C."/>
            <person name="Harrison M."/>
            <person name="Markivic C."/>
            <person name="Fulton R."/>
            <person name="Tin-Wollam A.-M."/>
            <person name="Shah N."/>
            <person name="Pepin K."/>
            <person name="Nash W."/>
            <person name="Thiruvilangam P."/>
            <person name="Bhonagiri V."/>
            <person name="Waters C."/>
            <person name="Tu K.C."/>
            <person name="Irgon J."/>
            <person name="Wilson R.K."/>
        </authorList>
    </citation>
    <scope>NUCLEOTIDE SEQUENCE [LARGE SCALE GENOMIC DNA]</scope>
    <source>
        <strain>ATCC BAA-1116 / BB120</strain>
    </source>
</reference>
<gene>
    <name type="ordered locus">VIBHAR_02118</name>
</gene>
<accession>A7MVI0</accession>
<feature type="chain" id="PRO_1000065469" description="UPF0299 membrane protein VIBHAR_02118">
    <location>
        <begin position="1"/>
        <end position="124"/>
    </location>
</feature>
<feature type="transmembrane region" description="Helical" evidence="1">
    <location>
        <begin position="6"/>
        <end position="26"/>
    </location>
</feature>
<feature type="transmembrane region" description="Helical" evidence="1">
    <location>
        <begin position="35"/>
        <end position="55"/>
    </location>
</feature>
<feature type="transmembrane region" description="Helical" evidence="1">
    <location>
        <begin position="72"/>
        <end position="92"/>
    </location>
</feature>
<feature type="transmembrane region" description="Helical" evidence="1">
    <location>
        <begin position="95"/>
        <end position="115"/>
    </location>
</feature>
<organism>
    <name type="scientific">Vibrio campbellii (strain ATCC BAA-1116)</name>
    <dbReference type="NCBI Taxonomy" id="2902295"/>
    <lineage>
        <taxon>Bacteria</taxon>
        <taxon>Pseudomonadati</taxon>
        <taxon>Pseudomonadota</taxon>
        <taxon>Gammaproteobacteria</taxon>
        <taxon>Vibrionales</taxon>
        <taxon>Vibrionaceae</taxon>
        <taxon>Vibrio</taxon>
    </lineage>
</organism>
<evidence type="ECO:0000255" key="1">
    <source>
        <dbReference type="HAMAP-Rule" id="MF_01144"/>
    </source>
</evidence>